<keyword id="KW-0963">Cytoplasm</keyword>
<keyword id="KW-0507">mRNA processing</keyword>
<keyword id="KW-0508">mRNA splicing</keyword>
<keyword id="KW-0539">Nucleus</keyword>
<keyword id="KW-1185">Reference proteome</keyword>
<keyword id="KW-0747">Spliceosome</keyword>
<comment type="function">
    <text evidence="1">Involved in pre-mRNA splicing.</text>
</comment>
<comment type="subunit">
    <text evidence="1">Associated with the spliceosome.</text>
</comment>
<comment type="subcellular location">
    <subcellularLocation>
        <location evidence="1">Cytoplasm</location>
    </subcellularLocation>
    <subcellularLocation>
        <location evidence="1">Nucleus</location>
    </subcellularLocation>
</comment>
<comment type="similarity">
    <text evidence="2">Belongs to the ISY1 family.</text>
</comment>
<organism>
    <name type="scientific">Yarrowia lipolytica (strain CLIB 122 / E 150)</name>
    <name type="common">Yeast</name>
    <name type="synonym">Candida lipolytica</name>
    <dbReference type="NCBI Taxonomy" id="284591"/>
    <lineage>
        <taxon>Eukaryota</taxon>
        <taxon>Fungi</taxon>
        <taxon>Dikarya</taxon>
        <taxon>Ascomycota</taxon>
        <taxon>Saccharomycotina</taxon>
        <taxon>Dipodascomycetes</taxon>
        <taxon>Dipodascales</taxon>
        <taxon>Dipodascales incertae sedis</taxon>
        <taxon>Yarrowia</taxon>
    </lineage>
</organism>
<protein>
    <recommendedName>
        <fullName>Pre-mRNA-splicing factor ISY1</fullName>
    </recommendedName>
</protein>
<dbReference type="EMBL" id="CR382130">
    <property type="protein sequence ID" value="CAG80863.1"/>
    <property type="molecule type" value="Genomic_DNA"/>
</dbReference>
<dbReference type="RefSeq" id="XP_502675.1">
    <property type="nucleotide sequence ID" value="XM_502675.1"/>
</dbReference>
<dbReference type="SMR" id="Q6C9I7"/>
<dbReference type="FunCoup" id="Q6C9I7">
    <property type="interactions" value="239"/>
</dbReference>
<dbReference type="STRING" id="284591.Q6C9I7"/>
<dbReference type="EnsemblFungi" id="CAG80863">
    <property type="protein sequence ID" value="CAG80863"/>
    <property type="gene ID" value="YALI0_D10901g"/>
</dbReference>
<dbReference type="KEGG" id="yli:2910445"/>
<dbReference type="VEuPathDB" id="FungiDB:YALI0_D10901g"/>
<dbReference type="HOGENOM" id="CLU_043453_2_0_1"/>
<dbReference type="InParanoid" id="Q6C9I7"/>
<dbReference type="OMA" id="QKSTRIY"/>
<dbReference type="OrthoDB" id="91659at4891"/>
<dbReference type="Proteomes" id="UP000001300">
    <property type="component" value="Chromosome D"/>
</dbReference>
<dbReference type="GO" id="GO:0071013">
    <property type="term" value="C:catalytic step 2 spliceosome"/>
    <property type="evidence" value="ECO:0000318"/>
    <property type="project" value="GO_Central"/>
</dbReference>
<dbReference type="GO" id="GO:0005737">
    <property type="term" value="C:cytoplasm"/>
    <property type="evidence" value="ECO:0007669"/>
    <property type="project" value="UniProtKB-SubCell"/>
</dbReference>
<dbReference type="GO" id="GO:0071014">
    <property type="term" value="C:post-mRNA release spliceosomal complex"/>
    <property type="evidence" value="ECO:0000318"/>
    <property type="project" value="GO_Central"/>
</dbReference>
<dbReference type="GO" id="GO:0071020">
    <property type="term" value="C:post-spliceosomal complex"/>
    <property type="evidence" value="ECO:0000318"/>
    <property type="project" value="GO_Central"/>
</dbReference>
<dbReference type="GO" id="GO:0000974">
    <property type="term" value="C:Prp19 complex"/>
    <property type="evidence" value="ECO:0000318"/>
    <property type="project" value="GO_Central"/>
</dbReference>
<dbReference type="GO" id="GO:0071006">
    <property type="term" value="C:U2-type catalytic step 1 spliceosome"/>
    <property type="evidence" value="ECO:0007669"/>
    <property type="project" value="EnsemblFungi"/>
</dbReference>
<dbReference type="GO" id="GO:0071007">
    <property type="term" value="C:U2-type catalytic step 2 spliceosome"/>
    <property type="evidence" value="ECO:0007669"/>
    <property type="project" value="EnsemblFungi"/>
</dbReference>
<dbReference type="GO" id="GO:0071008">
    <property type="term" value="C:U2-type post-mRNA release spliceosomal complex"/>
    <property type="evidence" value="ECO:0007669"/>
    <property type="project" value="EnsemblFungi"/>
</dbReference>
<dbReference type="GO" id="GO:0000384">
    <property type="term" value="F:first spliceosomal transesterification activity"/>
    <property type="evidence" value="ECO:0007669"/>
    <property type="project" value="EnsemblFungi"/>
</dbReference>
<dbReference type="GO" id="GO:0000350">
    <property type="term" value="P:generation of catalytic spliceosome for second transesterification step"/>
    <property type="evidence" value="ECO:0000318"/>
    <property type="project" value="GO_Central"/>
</dbReference>
<dbReference type="GO" id="GO:0000389">
    <property type="term" value="P:mRNA 3'-splice site recognition"/>
    <property type="evidence" value="ECO:0000318"/>
    <property type="project" value="GO_Central"/>
</dbReference>
<dbReference type="GO" id="GO:0045292">
    <property type="term" value="P:mRNA cis splicing, via spliceosome"/>
    <property type="evidence" value="ECO:0007669"/>
    <property type="project" value="EnsemblFungi"/>
</dbReference>
<dbReference type="FunFam" id="1.10.287.660:FF:000001">
    <property type="entry name" value="pre-mRNA-splicing factor ISY1 homolog"/>
    <property type="match status" value="1"/>
</dbReference>
<dbReference type="Gene3D" id="1.10.287.660">
    <property type="entry name" value="Helix hairpin bin"/>
    <property type="match status" value="1"/>
</dbReference>
<dbReference type="InterPro" id="IPR029012">
    <property type="entry name" value="Helix_hairpin_bin_sf"/>
</dbReference>
<dbReference type="InterPro" id="IPR009360">
    <property type="entry name" value="Isy1"/>
</dbReference>
<dbReference type="InterPro" id="IPR037200">
    <property type="entry name" value="Isy1_sf"/>
</dbReference>
<dbReference type="PANTHER" id="PTHR13021">
    <property type="entry name" value="PRE-MRNA-SPLICING FACTOR ISY1"/>
    <property type="match status" value="1"/>
</dbReference>
<dbReference type="Pfam" id="PF06246">
    <property type="entry name" value="Isy1"/>
    <property type="match status" value="1"/>
</dbReference>
<dbReference type="SUPFAM" id="SSF140102">
    <property type="entry name" value="ISY1 domain-like"/>
    <property type="match status" value="1"/>
</dbReference>
<proteinExistence type="inferred from homology"/>
<accession>Q6C9I7</accession>
<sequence length="220" mass="25196">MSRNSEKQGSMLHRFQQQQANAAGLLDVGRTVRPTYISGVESLPQAEKWRSQVMKEISRKVTKIQDPALSDFQLRDLNDEINKLMSERHRWDLQIRSLGGPNYASFGGKKRGYQYYGRARELPGVSEMLQSQKKDDTKKSGDFYIPPKNLNMVYFGYADDNVTGLMEFEKQRESELQDMLAGKPDEDSGFVVGDITVPEEGDLEARLLEERKRRVQALLD</sequence>
<feature type="chain" id="PRO_0000192975" description="Pre-mRNA-splicing factor ISY1">
    <location>
        <begin position="1"/>
        <end position="220"/>
    </location>
</feature>
<gene>
    <name type="primary">ISY1</name>
    <name type="ordered locus">YALI0D10901g</name>
</gene>
<evidence type="ECO:0000250" key="1"/>
<evidence type="ECO:0000305" key="2"/>
<name>ISY1_YARLI</name>
<reference key="1">
    <citation type="journal article" date="2004" name="Nature">
        <title>Genome evolution in yeasts.</title>
        <authorList>
            <person name="Dujon B."/>
            <person name="Sherman D."/>
            <person name="Fischer G."/>
            <person name="Durrens P."/>
            <person name="Casaregola S."/>
            <person name="Lafontaine I."/>
            <person name="de Montigny J."/>
            <person name="Marck C."/>
            <person name="Neuveglise C."/>
            <person name="Talla E."/>
            <person name="Goffard N."/>
            <person name="Frangeul L."/>
            <person name="Aigle M."/>
            <person name="Anthouard V."/>
            <person name="Babour A."/>
            <person name="Barbe V."/>
            <person name="Barnay S."/>
            <person name="Blanchin S."/>
            <person name="Beckerich J.-M."/>
            <person name="Beyne E."/>
            <person name="Bleykasten C."/>
            <person name="Boisrame A."/>
            <person name="Boyer J."/>
            <person name="Cattolico L."/>
            <person name="Confanioleri F."/>
            <person name="de Daruvar A."/>
            <person name="Despons L."/>
            <person name="Fabre E."/>
            <person name="Fairhead C."/>
            <person name="Ferry-Dumazet H."/>
            <person name="Groppi A."/>
            <person name="Hantraye F."/>
            <person name="Hennequin C."/>
            <person name="Jauniaux N."/>
            <person name="Joyet P."/>
            <person name="Kachouri R."/>
            <person name="Kerrest A."/>
            <person name="Koszul R."/>
            <person name="Lemaire M."/>
            <person name="Lesur I."/>
            <person name="Ma L."/>
            <person name="Muller H."/>
            <person name="Nicaud J.-M."/>
            <person name="Nikolski M."/>
            <person name="Oztas S."/>
            <person name="Ozier-Kalogeropoulos O."/>
            <person name="Pellenz S."/>
            <person name="Potier S."/>
            <person name="Richard G.-F."/>
            <person name="Straub M.-L."/>
            <person name="Suleau A."/>
            <person name="Swennen D."/>
            <person name="Tekaia F."/>
            <person name="Wesolowski-Louvel M."/>
            <person name="Westhof E."/>
            <person name="Wirth B."/>
            <person name="Zeniou-Meyer M."/>
            <person name="Zivanovic Y."/>
            <person name="Bolotin-Fukuhara M."/>
            <person name="Thierry A."/>
            <person name="Bouchier C."/>
            <person name="Caudron B."/>
            <person name="Scarpelli C."/>
            <person name="Gaillardin C."/>
            <person name="Weissenbach J."/>
            <person name="Wincker P."/>
            <person name="Souciet J.-L."/>
        </authorList>
    </citation>
    <scope>NUCLEOTIDE SEQUENCE [LARGE SCALE GENOMIC DNA]</scope>
    <source>
        <strain>CLIB 122 / E 150</strain>
    </source>
</reference>